<accession>P52435</accession>
<accession>A5D6V8</accession>
<accession>O43375</accession>
<comment type="function">
    <text evidence="3 4 5 6">Core component of RNA polymerase II (Pol II), a DNA-dependent RNA polymerase which synthesizes mRNA precursors and many functional non-coding RNAs using the four ribonucleoside triphosphates as substrates.</text>
</comment>
<comment type="subunit">
    <text evidence="1 3 4 5 6">Component of the RNA polymerase II (Pol II) core complex consisting of 12 subunits: a ten-subunit catalytic core composed of POLR2A/RPB1, POLR2B/RPB2, POLR2C/RPB3, POLR2I/RPB9, POLR2J/RPB11, POLR2E/RPABC1, POLR2F/RPABC2, POLR2H/RPABC3, POLR2K/RPABC4 and POLR2L/RPABC5 and a mobile stalk composed of two subunits POLR2D/RPB4 and POLR2G/RPB7, protruding from the core and functioning primarily in transcription initiation. Part of Pol II(G) complex, in which Pol II core associates with an additional subunit POLR2M; unlike conventional Pol II, Pol II(G) functions as a transcriptional repressor. Part of TBP-based Pol II pre-initiation complex (PIC), in which Pol II core assembles with general transcription factors and other specific initiation factors including GTF2E1, GTF2E2, GTF2F1, GTF2F2, TCEA1, ERCC2, ERCC3, GTF2H2, GTF2H3, GTF2H4, GTF2H5, GTF2A1, GTF2A2, GTF2B and TBP; this large multi-subunit PIC complex mediates DNA unwinding and targets Pol II core to the transcription start site where the first phosphodiester bond forms (PubMed:27193682, PubMed:30190596, PubMed:9852112). Interacts with AATF (PubMed:10783144). Interacts with PTPN6; this interaction promotes the recruitment of RNA pol II to the PCK1 promoter (PubMed:37595871).</text>
</comment>
<comment type="interaction">
    <interactant intactId="EBI-394753">
        <id>P52435</id>
    </interactant>
    <interactant intactId="EBI-11974185">
        <id>Q494R4-2</id>
        <label>DRC12</label>
    </interactant>
    <organismsDiffer>false</organismsDiffer>
    <experiments>3</experiments>
</comment>
<comment type="interaction">
    <interactant intactId="EBI-394753">
        <id>P52435</id>
    </interactant>
    <interactant intactId="EBI-3906629">
        <id>P15173</id>
        <label>MYOG</label>
    </interactant>
    <organismsDiffer>false</organismsDiffer>
    <experiments>3</experiments>
</comment>
<comment type="interaction">
    <interactant intactId="EBI-394753">
        <id>P52435</id>
    </interactant>
    <interactant intactId="EBI-741158">
        <id>Q96HA8</id>
        <label>NTAQ1</label>
    </interactant>
    <organismsDiffer>false</organismsDiffer>
    <experiments>3</experiments>
</comment>
<comment type="interaction">
    <interactant intactId="EBI-394753">
        <id>P52435</id>
    </interactant>
    <interactant intactId="EBI-536879">
        <id>O43482</id>
        <label>OIP5</label>
    </interactant>
    <organismsDiffer>false</organismsDiffer>
    <experiments>3</experiments>
</comment>
<comment type="interaction">
    <interactant intactId="EBI-394753">
        <id>P52435</id>
    </interactant>
    <interactant intactId="EBI-1055079">
        <id>O15160</id>
        <label>POLR1C</label>
    </interactant>
    <organismsDiffer>false</organismsDiffer>
    <experiments>12</experiments>
</comment>
<comment type="interaction">
    <interactant intactId="EBI-394753">
        <id>P52435</id>
    </interactant>
    <interactant intactId="EBI-727004">
        <id>O00560</id>
        <label>SDCBP</label>
    </interactant>
    <organismsDiffer>false</organismsDiffer>
    <experiments>3</experiments>
</comment>
<comment type="interaction">
    <interactant intactId="EBI-394753">
        <id>P52435</id>
    </interactant>
    <interactant intactId="EBI-12004298">
        <id>O75971-2</id>
        <label>SNAPC5</label>
    </interactant>
    <organismsDiffer>false</organismsDiffer>
    <experiments>3</experiments>
</comment>
<comment type="interaction">
    <interactant intactId="EBI-394753">
        <id>P52435</id>
    </interactant>
    <interactant intactId="EBI-3650647">
        <id>Q9BUZ4</id>
        <label>TRAF4</label>
    </interactant>
    <organismsDiffer>false</organismsDiffer>
    <experiments>3</experiments>
</comment>
<comment type="interaction">
    <interactant intactId="EBI-394753">
        <id>P52435</id>
    </interactant>
    <interactant intactId="EBI-2559305">
        <id>A5D8V6</id>
        <label>VPS37C</label>
    </interactant>
    <organismsDiffer>false</organismsDiffer>
    <experiments>3</experiments>
</comment>
<comment type="subcellular location">
    <subcellularLocation>
        <location evidence="6">Nucleus</location>
    </subcellularLocation>
</comment>
<comment type="tissue specificity">
    <text evidence="2">Ubiquitously expressed. High expression was found in heart and skeletal muscle.</text>
</comment>
<comment type="similarity">
    <text evidence="8">Belongs to the archaeal Rpo11/eukaryotic RPB11/RPC19 RNA polymerase subunit family.</text>
</comment>
<sequence>MNAPPAFESFLLFEGEKKITINKDTKVPNACLFTINKEDHTLGNIIKSQLLKDPQVLFAGYKVPHPLEHKIIIRVQTTPDYSPQEAFTNAITDLISELSLLEERFRVAIKDKQEGIE</sequence>
<protein>
    <recommendedName>
        <fullName>DNA-directed RNA polymerase II subunit RPB11-a</fullName>
        <shortName>RNA polymerase II subunit B11-a</shortName>
        <shortName>RPB11a</shortName>
    </recommendedName>
    <alternativeName>
        <fullName>DNA-directed RNA polymerase II subunit J-1</fullName>
    </alternativeName>
    <alternativeName>
        <fullName>RNA polymerase II 13.3 kDa subunit</fullName>
    </alternativeName>
</protein>
<proteinExistence type="evidence at protein level"/>
<name>RPB11_HUMAN</name>
<reference key="1">
    <citation type="journal article" date="1996" name="FEBS Lett.">
        <title>Cloning of a novel human RNA polymerase II subunit downregulated by doxorubicin: new potential mechanisms of drug related toxicity.</title>
        <authorList>
            <person name="Fanciulli M."/>
            <person name="Bruno T."/>
            <person name="Cerboni C."/>
            <person name="Bonetto F."/>
            <person name="Iacobini C."/>
            <person name="Frati L."/>
            <person name="Piccoli M."/>
            <person name="Floridi A."/>
            <person name="Santoni A."/>
            <person name="Punturieri A."/>
        </authorList>
    </citation>
    <scope>NUCLEOTIDE SEQUENCE [MRNA]</scope>
    <source>
        <tissue>Colon</tissue>
    </source>
</reference>
<reference key="2">
    <citation type="journal article" date="1997" name="J. Biol. Chem.">
        <title>Interactions between the human RNA polymerase II subunits.</title>
        <authorList>
            <person name="Acker J."/>
            <person name="de Graaff M."/>
            <person name="Cheynel I."/>
            <person name="Khazak V."/>
            <person name="Kedinger C."/>
            <person name="Vigneron M."/>
        </authorList>
    </citation>
    <scope>NUCLEOTIDE SEQUENCE [MRNA]</scope>
</reference>
<reference key="3">
    <citation type="journal article" date="2004" name="Nat. Genet.">
        <title>Complete sequencing and characterization of 21,243 full-length human cDNAs.</title>
        <authorList>
            <person name="Ota T."/>
            <person name="Suzuki Y."/>
            <person name="Nishikawa T."/>
            <person name="Otsuki T."/>
            <person name="Sugiyama T."/>
            <person name="Irie R."/>
            <person name="Wakamatsu A."/>
            <person name="Hayashi K."/>
            <person name="Sato H."/>
            <person name="Nagai K."/>
            <person name="Kimura K."/>
            <person name="Makita H."/>
            <person name="Sekine M."/>
            <person name="Obayashi M."/>
            <person name="Nishi T."/>
            <person name="Shibahara T."/>
            <person name="Tanaka T."/>
            <person name="Ishii S."/>
            <person name="Yamamoto J."/>
            <person name="Saito K."/>
            <person name="Kawai Y."/>
            <person name="Isono Y."/>
            <person name="Nakamura Y."/>
            <person name="Nagahari K."/>
            <person name="Murakami K."/>
            <person name="Yasuda T."/>
            <person name="Iwayanagi T."/>
            <person name="Wagatsuma M."/>
            <person name="Shiratori A."/>
            <person name="Sudo H."/>
            <person name="Hosoiri T."/>
            <person name="Kaku Y."/>
            <person name="Kodaira H."/>
            <person name="Kondo H."/>
            <person name="Sugawara M."/>
            <person name="Takahashi M."/>
            <person name="Kanda K."/>
            <person name="Yokoi T."/>
            <person name="Furuya T."/>
            <person name="Kikkawa E."/>
            <person name="Omura Y."/>
            <person name="Abe K."/>
            <person name="Kamihara K."/>
            <person name="Katsuta N."/>
            <person name="Sato K."/>
            <person name="Tanikawa M."/>
            <person name="Yamazaki M."/>
            <person name="Ninomiya K."/>
            <person name="Ishibashi T."/>
            <person name="Yamashita H."/>
            <person name="Murakawa K."/>
            <person name="Fujimori K."/>
            <person name="Tanai H."/>
            <person name="Kimata M."/>
            <person name="Watanabe M."/>
            <person name="Hiraoka S."/>
            <person name="Chiba Y."/>
            <person name="Ishida S."/>
            <person name="Ono Y."/>
            <person name="Takiguchi S."/>
            <person name="Watanabe S."/>
            <person name="Yosida M."/>
            <person name="Hotuta T."/>
            <person name="Kusano J."/>
            <person name="Kanehori K."/>
            <person name="Takahashi-Fujii A."/>
            <person name="Hara H."/>
            <person name="Tanase T.-O."/>
            <person name="Nomura Y."/>
            <person name="Togiya S."/>
            <person name="Komai F."/>
            <person name="Hara R."/>
            <person name="Takeuchi K."/>
            <person name="Arita M."/>
            <person name="Imose N."/>
            <person name="Musashino K."/>
            <person name="Yuuki H."/>
            <person name="Oshima A."/>
            <person name="Sasaki N."/>
            <person name="Aotsuka S."/>
            <person name="Yoshikawa Y."/>
            <person name="Matsunawa H."/>
            <person name="Ichihara T."/>
            <person name="Shiohata N."/>
            <person name="Sano S."/>
            <person name="Moriya S."/>
            <person name="Momiyama H."/>
            <person name="Satoh N."/>
            <person name="Takami S."/>
            <person name="Terashima Y."/>
            <person name="Suzuki O."/>
            <person name="Nakagawa S."/>
            <person name="Senoh A."/>
            <person name="Mizoguchi H."/>
            <person name="Goto Y."/>
            <person name="Shimizu F."/>
            <person name="Wakebe H."/>
            <person name="Hishigaki H."/>
            <person name="Watanabe T."/>
            <person name="Sugiyama A."/>
            <person name="Takemoto M."/>
            <person name="Kawakami B."/>
            <person name="Yamazaki M."/>
            <person name="Watanabe K."/>
            <person name="Kumagai A."/>
            <person name="Itakura S."/>
            <person name="Fukuzumi Y."/>
            <person name="Fujimori Y."/>
            <person name="Komiyama M."/>
            <person name="Tashiro H."/>
            <person name="Tanigami A."/>
            <person name="Fujiwara T."/>
            <person name="Ono T."/>
            <person name="Yamada K."/>
            <person name="Fujii Y."/>
            <person name="Ozaki K."/>
            <person name="Hirao M."/>
            <person name="Ohmori Y."/>
            <person name="Kawabata A."/>
            <person name="Hikiji T."/>
            <person name="Kobatake N."/>
            <person name="Inagaki H."/>
            <person name="Ikema Y."/>
            <person name="Okamoto S."/>
            <person name="Okitani R."/>
            <person name="Kawakami T."/>
            <person name="Noguchi S."/>
            <person name="Itoh T."/>
            <person name="Shigeta K."/>
            <person name="Senba T."/>
            <person name="Matsumura K."/>
            <person name="Nakajima Y."/>
            <person name="Mizuno T."/>
            <person name="Morinaga M."/>
            <person name="Sasaki M."/>
            <person name="Togashi T."/>
            <person name="Oyama M."/>
            <person name="Hata H."/>
            <person name="Watanabe M."/>
            <person name="Komatsu T."/>
            <person name="Mizushima-Sugano J."/>
            <person name="Satoh T."/>
            <person name="Shirai Y."/>
            <person name="Takahashi Y."/>
            <person name="Nakagawa K."/>
            <person name="Okumura K."/>
            <person name="Nagase T."/>
            <person name="Nomura N."/>
            <person name="Kikuchi H."/>
            <person name="Masuho Y."/>
            <person name="Yamashita R."/>
            <person name="Nakai K."/>
            <person name="Yada T."/>
            <person name="Nakamura Y."/>
            <person name="Ohara O."/>
            <person name="Isogai T."/>
            <person name="Sugano S."/>
        </authorList>
    </citation>
    <scope>NUCLEOTIDE SEQUENCE [LARGE SCALE MRNA]</scope>
    <source>
        <tissue>Brain</tissue>
    </source>
</reference>
<reference key="4">
    <citation type="journal article" date="2003" name="Nature">
        <title>The DNA sequence of human chromosome 7.</title>
        <authorList>
            <person name="Hillier L.W."/>
            <person name="Fulton R.S."/>
            <person name="Fulton L.A."/>
            <person name="Graves T.A."/>
            <person name="Pepin K.H."/>
            <person name="Wagner-McPherson C."/>
            <person name="Layman D."/>
            <person name="Maas J."/>
            <person name="Jaeger S."/>
            <person name="Walker R."/>
            <person name="Wylie K."/>
            <person name="Sekhon M."/>
            <person name="Becker M.C."/>
            <person name="O'Laughlin M.D."/>
            <person name="Schaller M.E."/>
            <person name="Fewell G.A."/>
            <person name="Delehaunty K.D."/>
            <person name="Miner T.L."/>
            <person name="Nash W.E."/>
            <person name="Cordes M."/>
            <person name="Du H."/>
            <person name="Sun H."/>
            <person name="Edwards J."/>
            <person name="Bradshaw-Cordum H."/>
            <person name="Ali J."/>
            <person name="Andrews S."/>
            <person name="Isak A."/>
            <person name="Vanbrunt A."/>
            <person name="Nguyen C."/>
            <person name="Du F."/>
            <person name="Lamar B."/>
            <person name="Courtney L."/>
            <person name="Kalicki J."/>
            <person name="Ozersky P."/>
            <person name="Bielicki L."/>
            <person name="Scott K."/>
            <person name="Holmes A."/>
            <person name="Harkins R."/>
            <person name="Harris A."/>
            <person name="Strong C.M."/>
            <person name="Hou S."/>
            <person name="Tomlinson C."/>
            <person name="Dauphin-Kohlberg S."/>
            <person name="Kozlowicz-Reilly A."/>
            <person name="Leonard S."/>
            <person name="Rohlfing T."/>
            <person name="Rock S.M."/>
            <person name="Tin-Wollam A.-M."/>
            <person name="Abbott A."/>
            <person name="Minx P."/>
            <person name="Maupin R."/>
            <person name="Strowmatt C."/>
            <person name="Latreille P."/>
            <person name="Miller N."/>
            <person name="Johnson D."/>
            <person name="Murray J."/>
            <person name="Woessner J.P."/>
            <person name="Wendl M.C."/>
            <person name="Yang S.-P."/>
            <person name="Schultz B.R."/>
            <person name="Wallis J.W."/>
            <person name="Spieth J."/>
            <person name="Bieri T.A."/>
            <person name="Nelson J.O."/>
            <person name="Berkowicz N."/>
            <person name="Wohldmann P.E."/>
            <person name="Cook L.L."/>
            <person name="Hickenbotham M.T."/>
            <person name="Eldred J."/>
            <person name="Williams D."/>
            <person name="Bedell J.A."/>
            <person name="Mardis E.R."/>
            <person name="Clifton S.W."/>
            <person name="Chissoe S.L."/>
            <person name="Marra M.A."/>
            <person name="Raymond C."/>
            <person name="Haugen E."/>
            <person name="Gillett W."/>
            <person name="Zhou Y."/>
            <person name="James R."/>
            <person name="Phelps K."/>
            <person name="Iadanoto S."/>
            <person name="Bubb K."/>
            <person name="Simms E."/>
            <person name="Levy R."/>
            <person name="Clendenning J."/>
            <person name="Kaul R."/>
            <person name="Kent W.J."/>
            <person name="Furey T.S."/>
            <person name="Baertsch R.A."/>
            <person name="Brent M.R."/>
            <person name="Keibler E."/>
            <person name="Flicek P."/>
            <person name="Bork P."/>
            <person name="Suyama M."/>
            <person name="Bailey J.A."/>
            <person name="Portnoy M.E."/>
            <person name="Torrents D."/>
            <person name="Chinwalla A.T."/>
            <person name="Gish W.R."/>
            <person name="Eddy S.R."/>
            <person name="McPherson J.D."/>
            <person name="Olson M.V."/>
            <person name="Eichler E.E."/>
            <person name="Green E.D."/>
            <person name="Waterston R.H."/>
            <person name="Wilson R.K."/>
        </authorList>
    </citation>
    <scope>NUCLEOTIDE SEQUENCE [LARGE SCALE GENOMIC DNA]</scope>
</reference>
<reference key="5">
    <citation type="journal article" date="2004" name="Genome Res.">
        <title>The status, quality, and expansion of the NIH full-length cDNA project: the Mammalian Gene Collection (MGC).</title>
        <authorList>
            <consortium name="The MGC Project Team"/>
        </authorList>
    </citation>
    <scope>NUCLEOTIDE SEQUENCE [LARGE SCALE MRNA]</scope>
    <source>
        <tissue>Bone marrow</tissue>
        <tissue>Kidney</tissue>
    </source>
</reference>
<reference key="6">
    <citation type="submission" date="2009-03" db="UniProtKB">
        <authorList>
            <person name="Bienvenut W.V."/>
            <person name="Waridel P."/>
            <person name="Quadroni M."/>
        </authorList>
    </citation>
    <scope>PROTEIN SEQUENCE OF 1-18; 27-37; 48-62 AND 75-104</scope>
    <scope>ACETYLATION AT MET-1</scope>
    <scope>IDENTIFICATION BY MASS SPECTROMETRY</scope>
    <source>
        <tissue>Embryonic kidney</tissue>
    </source>
</reference>
<reference key="7">
    <citation type="journal article" date="1998" name="J. Biol. Chem.">
        <title>Immunoaffinity purification and functional characterization of human transcription factor IIH and RNA polymerase II from clonal cell lines that conditionally express epitope-tagged subunits of the multiprotein complexes.</title>
        <authorList>
            <person name="Kershnar E."/>
            <person name="Wu S.-Y."/>
            <person name="Chiang C.-M."/>
        </authorList>
    </citation>
    <scope>FUNCTION</scope>
    <scope>IDENTIFICATION IN THE RNA POLYMERASE II CORE-COMPLEX</scope>
    <scope>SUBCELLULAR LOCATION</scope>
</reference>
<reference key="8">
    <citation type="journal article" date="2000" name="FASEB J.">
        <title>Identification of a novel partner of RNA polymerase II subunit 11, Che-1, which interacts with and affects the growth suppression function of Rb.</title>
        <authorList>
            <person name="Fanciulli M."/>
            <person name="Bruno T."/>
            <person name="Di Padova M."/>
            <person name="De Angelis R."/>
            <person name="Iezzi S."/>
            <person name="Iacobini C."/>
            <person name="Floridi A."/>
            <person name="Passananti C."/>
        </authorList>
    </citation>
    <scope>INTERACTION WITH AATF</scope>
</reference>
<reference key="9">
    <citation type="journal article" date="2001" name="BMC Mol. Biol.">
        <title>A human RNA polymerase II subunit is encoded by a recently generated multigene family.</title>
        <authorList>
            <person name="Grandemange S."/>
            <person name="Schaller S."/>
            <person name="Yamano S."/>
            <person name="Du Manoir S."/>
            <person name="Shpakovski G.V."/>
            <person name="Mattei M.-G."/>
            <person name="Kedinger C."/>
            <person name="Vigneron M."/>
        </authorList>
    </citation>
    <scope>TISSUE SPECIFICITY</scope>
</reference>
<reference key="10">
    <citation type="journal article" date="2023" name="J. Biol. Chem.">
        <title>SHP-1 phosphatase acts as a coactivator of PCK1 transcription to control gluconeogenesis.</title>
        <authorList>
            <person name="Kumar A."/>
            <person name="Schwab M."/>
            <person name="Laborit Labrada B."/>
            <person name="Silveira M.A.D."/>
            <person name="Goudreault M."/>
            <person name="Fournier E."/>
            <person name="Bellmann K."/>
            <person name="Beauchemin N."/>
            <person name="Gingras A.C."/>
            <person name="Bilodeau S."/>
            <person name="Laplante M."/>
            <person name="Marette A."/>
        </authorList>
    </citation>
    <scope>FUNCTION</scope>
    <scope>INTERACTION WITH PTPN6</scope>
</reference>
<reference key="11">
    <citation type="journal article" date="2016" name="Nature">
        <title>Near-atomic resolution visualization of human transcription promoter opening.</title>
        <authorList>
            <person name="He Y."/>
            <person name="Yan C."/>
            <person name="Fang J."/>
            <person name="Inouye C."/>
            <person name="Tjian R."/>
            <person name="Ivanov I."/>
            <person name="Nogales E."/>
        </authorList>
    </citation>
    <scope>STRUCTURE BY ELECTRON MICROSCOPY (3.90 ANGSTROMS)</scope>
    <scope>FUNCTION OF POL II</scope>
    <scope>SUBUNIT</scope>
</reference>
<reference key="12">
    <citation type="journal article" date="2018" name="Nat. Struct. Mol. Biol.">
        <title>Architecture of Pol II(G) and molecular mechanism of transcription regulation by Gdown1.</title>
        <authorList>
            <person name="Jishage M."/>
            <person name="Yu X."/>
            <person name="Shi Y."/>
            <person name="Ganesan S.J."/>
            <person name="Chen W.Y."/>
            <person name="Sali A."/>
            <person name="Chait B.T."/>
            <person name="Asturias F.J."/>
            <person name="Roeder R.G."/>
        </authorList>
    </citation>
    <scope>STRUCTURE BY ELECTRON MICROSCOPY (3.90 ANGSTROMS)</scope>
    <scope>FUNCTION OF POL II</scope>
    <scope>SUBUNIT</scope>
</reference>
<organism>
    <name type="scientific">Homo sapiens</name>
    <name type="common">Human</name>
    <dbReference type="NCBI Taxonomy" id="9606"/>
    <lineage>
        <taxon>Eukaryota</taxon>
        <taxon>Metazoa</taxon>
        <taxon>Chordata</taxon>
        <taxon>Craniata</taxon>
        <taxon>Vertebrata</taxon>
        <taxon>Euteleostomi</taxon>
        <taxon>Mammalia</taxon>
        <taxon>Eutheria</taxon>
        <taxon>Euarchontoglires</taxon>
        <taxon>Primates</taxon>
        <taxon>Haplorrhini</taxon>
        <taxon>Catarrhini</taxon>
        <taxon>Hominidae</taxon>
        <taxon>Homo</taxon>
    </lineage>
</organism>
<feature type="chain" id="PRO_0000149309" description="DNA-directed RNA polymerase II subunit RPB11-a">
    <location>
        <begin position="1"/>
        <end position="117"/>
    </location>
</feature>
<feature type="modified residue" description="N-acetylmethionine" evidence="7">
    <location>
        <position position="1"/>
    </location>
</feature>
<keyword id="KW-0002">3D-structure</keyword>
<keyword id="KW-0007">Acetylation</keyword>
<keyword id="KW-0903">Direct protein sequencing</keyword>
<keyword id="KW-0240">DNA-directed RNA polymerase</keyword>
<keyword id="KW-0539">Nucleus</keyword>
<keyword id="KW-1267">Proteomics identification</keyword>
<keyword id="KW-1185">Reference proteome</keyword>
<keyword id="KW-0804">Transcription</keyword>
<gene>
    <name type="primary">POLR2J</name>
    <name type="synonym">POLR2J1</name>
</gene>
<dbReference type="EMBL" id="X82385">
    <property type="protein sequence ID" value="CAA57785.1"/>
    <property type="molecule type" value="mRNA"/>
</dbReference>
<dbReference type="EMBL" id="L37127">
    <property type="protein sequence ID" value="AAD05361.1"/>
    <property type="molecule type" value="mRNA"/>
</dbReference>
<dbReference type="EMBL" id="X98433">
    <property type="protein sequence ID" value="CAA67075.1"/>
    <property type="molecule type" value="mRNA"/>
</dbReference>
<dbReference type="EMBL" id="AK290515">
    <property type="protein sequence ID" value="BAF83204.1"/>
    <property type="molecule type" value="mRNA"/>
</dbReference>
<dbReference type="EMBL" id="AC093668">
    <property type="status" value="NOT_ANNOTATED_CDS"/>
    <property type="molecule type" value="Genomic_DNA"/>
</dbReference>
<dbReference type="EMBL" id="BC024165">
    <property type="protein sequence ID" value="AAH24165.1"/>
    <property type="molecule type" value="mRNA"/>
</dbReference>
<dbReference type="EMBL" id="BC065711">
    <property type="protein sequence ID" value="AAH65711.1"/>
    <property type="molecule type" value="mRNA"/>
</dbReference>
<dbReference type="EMBL" id="BC139902">
    <property type="protein sequence ID" value="AAI39903.1"/>
    <property type="molecule type" value="mRNA"/>
</dbReference>
<dbReference type="EMBL" id="BC141830">
    <property type="protein sequence ID" value="AAI41831.1"/>
    <property type="molecule type" value="mRNA"/>
</dbReference>
<dbReference type="CCDS" id="CCDS5724.1"/>
<dbReference type="PIR" id="S71325">
    <property type="entry name" value="S71325"/>
</dbReference>
<dbReference type="RefSeq" id="NP_006225.1">
    <property type="nucleotide sequence ID" value="NM_006234.6"/>
</dbReference>
<dbReference type="PDB" id="5IY6">
    <property type="method" value="EM"/>
    <property type="resolution" value="7.20 A"/>
    <property type="chains" value="K=1-117"/>
</dbReference>
<dbReference type="PDB" id="5IY7">
    <property type="method" value="EM"/>
    <property type="resolution" value="8.60 A"/>
    <property type="chains" value="K=1-117"/>
</dbReference>
<dbReference type="PDB" id="5IY8">
    <property type="method" value="EM"/>
    <property type="resolution" value="7.90 A"/>
    <property type="chains" value="K=1-117"/>
</dbReference>
<dbReference type="PDB" id="5IY9">
    <property type="method" value="EM"/>
    <property type="resolution" value="6.30 A"/>
    <property type="chains" value="K=1-117"/>
</dbReference>
<dbReference type="PDB" id="5IYA">
    <property type="method" value="EM"/>
    <property type="resolution" value="5.40 A"/>
    <property type="chains" value="K=1-117"/>
</dbReference>
<dbReference type="PDB" id="5IYB">
    <property type="method" value="EM"/>
    <property type="resolution" value="3.90 A"/>
    <property type="chains" value="K=1-117"/>
</dbReference>
<dbReference type="PDB" id="5IYC">
    <property type="method" value="EM"/>
    <property type="resolution" value="3.90 A"/>
    <property type="chains" value="K=1-117"/>
</dbReference>
<dbReference type="PDB" id="5IYD">
    <property type="method" value="EM"/>
    <property type="resolution" value="3.90 A"/>
    <property type="chains" value="K=1-117"/>
</dbReference>
<dbReference type="PDB" id="6DRD">
    <property type="method" value="EM"/>
    <property type="resolution" value="3.90 A"/>
    <property type="chains" value="K=1-117"/>
</dbReference>
<dbReference type="PDB" id="6O9L">
    <property type="method" value="EM"/>
    <property type="resolution" value="7.20 A"/>
    <property type="chains" value="K=1-117"/>
</dbReference>
<dbReference type="PDB" id="6XRE">
    <property type="method" value="EM"/>
    <property type="resolution" value="4.60 A"/>
    <property type="chains" value="K=1-117"/>
</dbReference>
<dbReference type="PDB" id="7LBM">
    <property type="method" value="EM"/>
    <property type="resolution" value="4.80 A"/>
    <property type="chains" value="K=1-117"/>
</dbReference>
<dbReference type="PDB" id="9EHZ">
    <property type="method" value="EM"/>
    <property type="resolution" value="2.60 A"/>
    <property type="chains" value="K=1-117"/>
</dbReference>
<dbReference type="PDB" id="9EI1">
    <property type="method" value="EM"/>
    <property type="resolution" value="3.20 A"/>
    <property type="chains" value="K=1-117"/>
</dbReference>
<dbReference type="PDB" id="9EI3">
    <property type="method" value="EM"/>
    <property type="resolution" value="3.20 A"/>
    <property type="chains" value="K=1-117"/>
</dbReference>
<dbReference type="PDB" id="9EI4">
    <property type="method" value="EM"/>
    <property type="resolution" value="3.70 A"/>
    <property type="chains" value="K=1-117"/>
</dbReference>
<dbReference type="PDBsum" id="5IY6"/>
<dbReference type="PDBsum" id="5IY7"/>
<dbReference type="PDBsum" id="5IY8"/>
<dbReference type="PDBsum" id="5IY9"/>
<dbReference type="PDBsum" id="5IYA"/>
<dbReference type="PDBsum" id="5IYB"/>
<dbReference type="PDBsum" id="5IYC"/>
<dbReference type="PDBsum" id="5IYD"/>
<dbReference type="PDBsum" id="6DRD"/>
<dbReference type="PDBsum" id="6O9L"/>
<dbReference type="PDBsum" id="6XRE"/>
<dbReference type="PDBsum" id="7LBM"/>
<dbReference type="PDBsum" id="9EHZ"/>
<dbReference type="PDBsum" id="9EI1"/>
<dbReference type="PDBsum" id="9EI3"/>
<dbReference type="PDBsum" id="9EI4"/>
<dbReference type="EMDB" id="EMD-22294"/>
<dbReference type="EMDB" id="EMD-23255"/>
<dbReference type="EMDB" id="EMD-48071"/>
<dbReference type="EMDB" id="EMD-48073"/>
<dbReference type="EMDB" id="EMD-48075"/>
<dbReference type="EMDB" id="EMD-48076"/>
<dbReference type="EMDB" id="EMD-7997"/>
<dbReference type="EMDB" id="EMD-8132"/>
<dbReference type="EMDB" id="EMD-8133"/>
<dbReference type="EMDB" id="EMD-8134"/>
<dbReference type="EMDB" id="EMD-8135"/>
<dbReference type="EMDB" id="EMD-8136"/>
<dbReference type="EMDB" id="EMD-8137"/>
<dbReference type="EMDB" id="EMD-8138"/>
<dbReference type="SMR" id="P52435"/>
<dbReference type="BioGRID" id="111435">
    <property type="interactions" value="157"/>
</dbReference>
<dbReference type="ComplexPortal" id="CPX-2387">
    <property type="entry name" value="DNA-directed RNA polymerase II complex, Pol II(G) variant"/>
</dbReference>
<dbReference type="ComplexPortal" id="CPX-7481">
    <property type="entry name" value="DNA-directed RNA polymerase II complex"/>
</dbReference>
<dbReference type="CORUM" id="P52435"/>
<dbReference type="DIP" id="DIP-32913N"/>
<dbReference type="FunCoup" id="P52435">
    <property type="interactions" value="1937"/>
</dbReference>
<dbReference type="IntAct" id="P52435">
    <property type="interactions" value="110"/>
</dbReference>
<dbReference type="MINT" id="P52435"/>
<dbReference type="STRING" id="9606.ENSP00000292614"/>
<dbReference type="iPTMnet" id="P52435"/>
<dbReference type="PhosphoSitePlus" id="P52435"/>
<dbReference type="BioMuta" id="POLR2J"/>
<dbReference type="jPOST" id="P52435"/>
<dbReference type="MassIVE" id="P52435"/>
<dbReference type="PaxDb" id="9606-ENSP00000292614"/>
<dbReference type="PeptideAtlas" id="P52435"/>
<dbReference type="ProteomicsDB" id="56486"/>
<dbReference type="Pumba" id="P52435"/>
<dbReference type="Antibodypedia" id="31080">
    <property type="antibodies" value="297 antibodies from 27 providers"/>
</dbReference>
<dbReference type="DNASU" id="5439"/>
<dbReference type="Ensembl" id="ENST00000292614.10">
    <property type="protein sequence ID" value="ENSP00000292614.5"/>
    <property type="gene ID" value="ENSG00000005075.16"/>
</dbReference>
<dbReference type="GeneID" id="5439"/>
<dbReference type="KEGG" id="hsa:5439"/>
<dbReference type="MANE-Select" id="ENST00000292614.10">
    <property type="protein sequence ID" value="ENSP00000292614.5"/>
    <property type="RefSeq nucleotide sequence ID" value="NM_006234.6"/>
    <property type="RefSeq protein sequence ID" value="NP_006225.1"/>
</dbReference>
<dbReference type="UCSC" id="uc003uzp.2">
    <property type="organism name" value="human"/>
</dbReference>
<dbReference type="AGR" id="HGNC:9197"/>
<dbReference type="CTD" id="5439"/>
<dbReference type="DisGeNET" id="5439"/>
<dbReference type="GeneCards" id="POLR2J"/>
<dbReference type="HGNC" id="HGNC:9197">
    <property type="gene designation" value="POLR2J"/>
</dbReference>
<dbReference type="HPA" id="ENSG00000005075">
    <property type="expression patterns" value="Low tissue specificity"/>
</dbReference>
<dbReference type="MIM" id="604150">
    <property type="type" value="gene"/>
</dbReference>
<dbReference type="neXtProt" id="NX_P52435"/>
<dbReference type="OpenTargets" id="ENSG00000005075"/>
<dbReference type="PharmGKB" id="PA33517"/>
<dbReference type="VEuPathDB" id="HostDB:ENSG00000005075"/>
<dbReference type="eggNOG" id="KOG4392">
    <property type="taxonomic scope" value="Eukaryota"/>
</dbReference>
<dbReference type="GeneTree" id="ENSGT00550000074975"/>
<dbReference type="HOGENOM" id="CLU_090381_2_2_1"/>
<dbReference type="InParanoid" id="P52435"/>
<dbReference type="OMA" id="QATPENC"/>
<dbReference type="OrthoDB" id="10248581at2759"/>
<dbReference type="PAN-GO" id="P52435">
    <property type="GO annotations" value="2 GO annotations based on evolutionary models"/>
</dbReference>
<dbReference type="PhylomeDB" id="P52435"/>
<dbReference type="TreeFam" id="TF103044"/>
<dbReference type="PathwayCommons" id="P52435"/>
<dbReference type="Reactome" id="R-HSA-112382">
    <property type="pathway name" value="Formation of RNA Pol II elongation complex"/>
</dbReference>
<dbReference type="Reactome" id="R-HSA-113418">
    <property type="pathway name" value="Formation of the Early Elongation Complex"/>
</dbReference>
<dbReference type="Reactome" id="R-HSA-167152">
    <property type="pathway name" value="Formation of HIV elongation complex in the absence of HIV Tat"/>
</dbReference>
<dbReference type="Reactome" id="R-HSA-167158">
    <property type="pathway name" value="Formation of the HIV-1 Early Elongation Complex"/>
</dbReference>
<dbReference type="Reactome" id="R-HSA-167160">
    <property type="pathway name" value="RNA Pol II CTD phosphorylation and interaction with CE during HIV infection"/>
</dbReference>
<dbReference type="Reactome" id="R-HSA-167161">
    <property type="pathway name" value="HIV Transcription Initiation"/>
</dbReference>
<dbReference type="Reactome" id="R-HSA-167162">
    <property type="pathway name" value="RNA Polymerase II HIV Promoter Escape"/>
</dbReference>
<dbReference type="Reactome" id="R-HSA-167172">
    <property type="pathway name" value="Transcription of the HIV genome"/>
</dbReference>
<dbReference type="Reactome" id="R-HSA-167200">
    <property type="pathway name" value="Formation of HIV-1 elongation complex containing HIV-1 Tat"/>
</dbReference>
<dbReference type="Reactome" id="R-HSA-167238">
    <property type="pathway name" value="Pausing and recovery of Tat-mediated HIV elongation"/>
</dbReference>
<dbReference type="Reactome" id="R-HSA-167242">
    <property type="pathway name" value="Abortive elongation of HIV-1 transcript in the absence of Tat"/>
</dbReference>
<dbReference type="Reactome" id="R-HSA-167243">
    <property type="pathway name" value="Tat-mediated HIV elongation arrest and recovery"/>
</dbReference>
<dbReference type="Reactome" id="R-HSA-167246">
    <property type="pathway name" value="Tat-mediated elongation of the HIV-1 transcript"/>
</dbReference>
<dbReference type="Reactome" id="R-HSA-167287">
    <property type="pathway name" value="HIV elongation arrest and recovery"/>
</dbReference>
<dbReference type="Reactome" id="R-HSA-167290">
    <property type="pathway name" value="Pausing and recovery of HIV elongation"/>
</dbReference>
<dbReference type="Reactome" id="R-HSA-168325">
    <property type="pathway name" value="Viral Messenger RNA Synthesis"/>
</dbReference>
<dbReference type="Reactome" id="R-HSA-203927">
    <property type="pathway name" value="MicroRNA (miRNA) biogenesis"/>
</dbReference>
<dbReference type="Reactome" id="R-HSA-5578749">
    <property type="pathway name" value="Transcriptional regulation by small RNAs"/>
</dbReference>
<dbReference type="Reactome" id="R-HSA-5601884">
    <property type="pathway name" value="PIWI-interacting RNA (piRNA) biogenesis"/>
</dbReference>
<dbReference type="Reactome" id="R-HSA-5617472">
    <property type="pathway name" value="Activation of anterior HOX genes in hindbrain development during early embryogenesis"/>
</dbReference>
<dbReference type="Reactome" id="R-HSA-674695">
    <property type="pathway name" value="RNA Polymerase II Pre-transcription Events"/>
</dbReference>
<dbReference type="Reactome" id="R-HSA-6781823">
    <property type="pathway name" value="Formation of TC-NER Pre-Incision Complex"/>
</dbReference>
<dbReference type="Reactome" id="R-HSA-6781827">
    <property type="pathway name" value="Transcription-Coupled Nucleotide Excision Repair (TC-NER)"/>
</dbReference>
<dbReference type="Reactome" id="R-HSA-6782135">
    <property type="pathway name" value="Dual incision in TC-NER"/>
</dbReference>
<dbReference type="Reactome" id="R-HSA-6782210">
    <property type="pathway name" value="Gap-filling DNA repair synthesis and ligation in TC-NER"/>
</dbReference>
<dbReference type="Reactome" id="R-HSA-6796648">
    <property type="pathway name" value="TP53 Regulates Transcription of DNA Repair Genes"/>
</dbReference>
<dbReference type="Reactome" id="R-HSA-6803529">
    <property type="pathway name" value="FGFR2 alternative splicing"/>
</dbReference>
<dbReference type="Reactome" id="R-HSA-6807505">
    <property type="pathway name" value="RNA polymerase II transcribes snRNA genes"/>
</dbReference>
<dbReference type="Reactome" id="R-HSA-72086">
    <property type="pathway name" value="mRNA Capping"/>
</dbReference>
<dbReference type="Reactome" id="R-HSA-72163">
    <property type="pathway name" value="mRNA Splicing - Major Pathway"/>
</dbReference>
<dbReference type="Reactome" id="R-HSA-72165">
    <property type="pathway name" value="mRNA Splicing - Minor Pathway"/>
</dbReference>
<dbReference type="Reactome" id="R-HSA-72203">
    <property type="pathway name" value="Processing of Capped Intron-Containing Pre-mRNA"/>
</dbReference>
<dbReference type="Reactome" id="R-HSA-73776">
    <property type="pathway name" value="RNA Polymerase II Promoter Escape"/>
</dbReference>
<dbReference type="Reactome" id="R-HSA-73779">
    <property type="pathway name" value="RNA Polymerase II Transcription Pre-Initiation And Promoter Opening"/>
</dbReference>
<dbReference type="Reactome" id="R-HSA-75953">
    <property type="pathway name" value="RNA Polymerase II Transcription Initiation"/>
</dbReference>
<dbReference type="Reactome" id="R-HSA-75955">
    <property type="pathway name" value="RNA Polymerase II Transcription Elongation"/>
</dbReference>
<dbReference type="Reactome" id="R-HSA-76042">
    <property type="pathway name" value="RNA Polymerase II Transcription Initiation And Promoter Clearance"/>
</dbReference>
<dbReference type="Reactome" id="R-HSA-77075">
    <property type="pathway name" value="RNA Pol II CTD phosphorylation and interaction with CE"/>
</dbReference>
<dbReference type="Reactome" id="R-HSA-8851708">
    <property type="pathway name" value="Signaling by FGFR2 IIIa TM"/>
</dbReference>
<dbReference type="Reactome" id="R-HSA-9018519">
    <property type="pathway name" value="Estrogen-dependent gene expression"/>
</dbReference>
<dbReference type="Reactome" id="R-HSA-9670095">
    <property type="pathway name" value="Inhibition of DNA recombination at telomere"/>
</dbReference>
<dbReference type="SignaLink" id="P52435"/>
<dbReference type="SIGNOR" id="P52435"/>
<dbReference type="BioGRID-ORCS" id="5439">
    <property type="hits" value="439 hits in 734 CRISPR screens"/>
</dbReference>
<dbReference type="ChiTaRS" id="POLR2J">
    <property type="organism name" value="human"/>
</dbReference>
<dbReference type="EvolutionaryTrace" id="P52435"/>
<dbReference type="GeneWiki" id="POLR2J"/>
<dbReference type="GenomeRNAi" id="5439"/>
<dbReference type="Pharos" id="P52435">
    <property type="development level" value="Tbio"/>
</dbReference>
<dbReference type="PRO" id="PR:P52435"/>
<dbReference type="Proteomes" id="UP000005640">
    <property type="component" value="Chromosome 7"/>
</dbReference>
<dbReference type="RNAct" id="P52435">
    <property type="molecule type" value="protein"/>
</dbReference>
<dbReference type="Bgee" id="ENSG00000005075">
    <property type="expression patterns" value="Expressed in gastrocnemius and 105 other cell types or tissues"/>
</dbReference>
<dbReference type="ExpressionAtlas" id="P52435">
    <property type="expression patterns" value="baseline and differential"/>
</dbReference>
<dbReference type="GO" id="GO:0005654">
    <property type="term" value="C:nucleoplasm"/>
    <property type="evidence" value="ECO:0000304"/>
    <property type="project" value="Reactome"/>
</dbReference>
<dbReference type="GO" id="GO:0005634">
    <property type="term" value="C:nucleus"/>
    <property type="evidence" value="ECO:0000314"/>
    <property type="project" value="UniProtKB"/>
</dbReference>
<dbReference type="GO" id="GO:0005665">
    <property type="term" value="C:RNA polymerase II, core complex"/>
    <property type="evidence" value="ECO:0000314"/>
    <property type="project" value="UniProtKB"/>
</dbReference>
<dbReference type="GO" id="GO:0003677">
    <property type="term" value="F:DNA binding"/>
    <property type="evidence" value="ECO:0007669"/>
    <property type="project" value="InterPro"/>
</dbReference>
<dbReference type="GO" id="GO:0003899">
    <property type="term" value="F:DNA-directed RNA polymerase activity"/>
    <property type="evidence" value="ECO:0000304"/>
    <property type="project" value="ProtInc"/>
</dbReference>
<dbReference type="GO" id="GO:0030275">
    <property type="term" value="F:LRR domain binding"/>
    <property type="evidence" value="ECO:0000353"/>
    <property type="project" value="UniProtKB"/>
</dbReference>
<dbReference type="GO" id="GO:0046983">
    <property type="term" value="F:protein dimerization activity"/>
    <property type="evidence" value="ECO:0007669"/>
    <property type="project" value="InterPro"/>
</dbReference>
<dbReference type="GO" id="GO:0006366">
    <property type="term" value="P:transcription by RNA polymerase II"/>
    <property type="evidence" value="ECO:0000314"/>
    <property type="project" value="UniProtKB"/>
</dbReference>
<dbReference type="CDD" id="cd06926">
    <property type="entry name" value="RNAP_II_RPB11"/>
    <property type="match status" value="1"/>
</dbReference>
<dbReference type="FunFam" id="3.30.1360.10:FF:000003">
    <property type="entry name" value="DNA-directed RNA polymerase II subunit RPB11"/>
    <property type="match status" value="1"/>
</dbReference>
<dbReference type="Gene3D" id="3.30.1360.10">
    <property type="entry name" value="RNA polymerase, RBP11-like subunit"/>
    <property type="match status" value="1"/>
</dbReference>
<dbReference type="HAMAP" id="MF_00261">
    <property type="entry name" value="RNApol_arch_Rpo11"/>
    <property type="match status" value="1"/>
</dbReference>
<dbReference type="InterPro" id="IPR037685">
    <property type="entry name" value="RBP11"/>
</dbReference>
<dbReference type="InterPro" id="IPR036603">
    <property type="entry name" value="RBP11-like"/>
</dbReference>
<dbReference type="InterPro" id="IPR009025">
    <property type="entry name" value="RBP11-like_dimer"/>
</dbReference>
<dbReference type="InterPro" id="IPR008193">
    <property type="entry name" value="RNA_pol_Rpb11_13-16kDa_CS"/>
</dbReference>
<dbReference type="InterPro" id="IPR022905">
    <property type="entry name" value="Rpo11-like"/>
</dbReference>
<dbReference type="PANTHER" id="PTHR13946">
    <property type="entry name" value="DNA-DIRECTED RNA POLYMERASE I,II,III"/>
    <property type="match status" value="1"/>
</dbReference>
<dbReference type="PANTHER" id="PTHR13946:SF16">
    <property type="entry name" value="DNA-DIRECTED RNA POLYMERASE II SUBUNIT RPB11"/>
    <property type="match status" value="1"/>
</dbReference>
<dbReference type="Pfam" id="PF13656">
    <property type="entry name" value="RNA_pol_L_2"/>
    <property type="match status" value="1"/>
</dbReference>
<dbReference type="SUPFAM" id="SSF55257">
    <property type="entry name" value="RBP11-like subunits of RNA polymerase"/>
    <property type="match status" value="1"/>
</dbReference>
<dbReference type="PROSITE" id="PS01154">
    <property type="entry name" value="RNA_POL_L_13KD"/>
    <property type="match status" value="1"/>
</dbReference>
<evidence type="ECO:0000269" key="1">
    <source>
    </source>
</evidence>
<evidence type="ECO:0000269" key="2">
    <source>
    </source>
</evidence>
<evidence type="ECO:0000269" key="3">
    <source>
    </source>
</evidence>
<evidence type="ECO:0000269" key="4">
    <source>
    </source>
</evidence>
<evidence type="ECO:0000269" key="5">
    <source>
    </source>
</evidence>
<evidence type="ECO:0000269" key="6">
    <source>
    </source>
</evidence>
<evidence type="ECO:0000269" key="7">
    <source ref="6"/>
</evidence>
<evidence type="ECO:0000305" key="8"/>